<sequence length="160" mass="16617">MKLNELRDNHGARPKSKRLGRGIGSGKGKTSGKGVKGQKAREGVSLNGFEGGQLPIYRRLPKRGFVNIFRKEYAPLNIGTLNDAIEAGRVDASQEITEDALRAAGLVRGGKVAGVRLLARGEITRAVKITVAGASAAARAAVEQAGGSITTTVVAEAAEA</sequence>
<dbReference type="EMBL" id="CP000394">
    <property type="protein sequence ID" value="ABI61471.1"/>
    <property type="molecule type" value="Genomic_DNA"/>
</dbReference>
<dbReference type="RefSeq" id="WP_011631280.1">
    <property type="nucleotide sequence ID" value="NC_008343.2"/>
</dbReference>
<dbReference type="SMR" id="Q0BUN1"/>
<dbReference type="STRING" id="391165.GbCGDNIH1_0573"/>
<dbReference type="GeneID" id="69744826"/>
<dbReference type="KEGG" id="gbe:GbCGDNIH1_0573"/>
<dbReference type="eggNOG" id="COG0200">
    <property type="taxonomic scope" value="Bacteria"/>
</dbReference>
<dbReference type="HOGENOM" id="CLU_055188_4_0_5"/>
<dbReference type="OrthoDB" id="9810293at2"/>
<dbReference type="Proteomes" id="UP000001963">
    <property type="component" value="Chromosome"/>
</dbReference>
<dbReference type="GO" id="GO:0022625">
    <property type="term" value="C:cytosolic large ribosomal subunit"/>
    <property type="evidence" value="ECO:0007669"/>
    <property type="project" value="TreeGrafter"/>
</dbReference>
<dbReference type="GO" id="GO:0019843">
    <property type="term" value="F:rRNA binding"/>
    <property type="evidence" value="ECO:0007669"/>
    <property type="project" value="UniProtKB-UniRule"/>
</dbReference>
<dbReference type="GO" id="GO:0003735">
    <property type="term" value="F:structural constituent of ribosome"/>
    <property type="evidence" value="ECO:0007669"/>
    <property type="project" value="InterPro"/>
</dbReference>
<dbReference type="GO" id="GO:0006412">
    <property type="term" value="P:translation"/>
    <property type="evidence" value="ECO:0007669"/>
    <property type="project" value="UniProtKB-UniRule"/>
</dbReference>
<dbReference type="Gene3D" id="3.100.10.10">
    <property type="match status" value="1"/>
</dbReference>
<dbReference type="HAMAP" id="MF_01341">
    <property type="entry name" value="Ribosomal_uL15"/>
    <property type="match status" value="1"/>
</dbReference>
<dbReference type="InterPro" id="IPR030878">
    <property type="entry name" value="Ribosomal_uL15"/>
</dbReference>
<dbReference type="InterPro" id="IPR021131">
    <property type="entry name" value="Ribosomal_uL15/eL18"/>
</dbReference>
<dbReference type="InterPro" id="IPR036227">
    <property type="entry name" value="Ribosomal_uL15/eL18_sf"/>
</dbReference>
<dbReference type="InterPro" id="IPR005749">
    <property type="entry name" value="Ribosomal_uL15_bac-type"/>
</dbReference>
<dbReference type="InterPro" id="IPR001196">
    <property type="entry name" value="Ribosomal_uL15_CS"/>
</dbReference>
<dbReference type="NCBIfam" id="TIGR01071">
    <property type="entry name" value="rplO_bact"/>
    <property type="match status" value="1"/>
</dbReference>
<dbReference type="PANTHER" id="PTHR12934">
    <property type="entry name" value="50S RIBOSOMAL PROTEIN L15"/>
    <property type="match status" value="1"/>
</dbReference>
<dbReference type="PANTHER" id="PTHR12934:SF11">
    <property type="entry name" value="LARGE RIBOSOMAL SUBUNIT PROTEIN UL15M"/>
    <property type="match status" value="1"/>
</dbReference>
<dbReference type="Pfam" id="PF00828">
    <property type="entry name" value="Ribosomal_L27A"/>
    <property type="match status" value="1"/>
</dbReference>
<dbReference type="SUPFAM" id="SSF52080">
    <property type="entry name" value="Ribosomal proteins L15p and L18e"/>
    <property type="match status" value="1"/>
</dbReference>
<dbReference type="PROSITE" id="PS00475">
    <property type="entry name" value="RIBOSOMAL_L15"/>
    <property type="match status" value="1"/>
</dbReference>
<evidence type="ECO:0000255" key="1">
    <source>
        <dbReference type="HAMAP-Rule" id="MF_01341"/>
    </source>
</evidence>
<evidence type="ECO:0000256" key="2">
    <source>
        <dbReference type="SAM" id="MobiDB-lite"/>
    </source>
</evidence>
<evidence type="ECO:0000305" key="3"/>
<feature type="chain" id="PRO_1000054467" description="Large ribosomal subunit protein uL15">
    <location>
        <begin position="1"/>
        <end position="160"/>
    </location>
</feature>
<feature type="region of interest" description="Disordered" evidence="2">
    <location>
        <begin position="1"/>
        <end position="39"/>
    </location>
</feature>
<feature type="compositionally biased region" description="Basic and acidic residues" evidence="2">
    <location>
        <begin position="1"/>
        <end position="11"/>
    </location>
</feature>
<feature type="compositionally biased region" description="Gly residues" evidence="2">
    <location>
        <begin position="21"/>
        <end position="35"/>
    </location>
</feature>
<accession>Q0BUN1</accession>
<organism>
    <name type="scientific">Granulibacter bethesdensis (strain ATCC BAA-1260 / CGDNIH1)</name>
    <dbReference type="NCBI Taxonomy" id="391165"/>
    <lineage>
        <taxon>Bacteria</taxon>
        <taxon>Pseudomonadati</taxon>
        <taxon>Pseudomonadota</taxon>
        <taxon>Alphaproteobacteria</taxon>
        <taxon>Acetobacterales</taxon>
        <taxon>Acetobacteraceae</taxon>
        <taxon>Granulibacter</taxon>
    </lineage>
</organism>
<comment type="function">
    <text evidence="1">Binds to the 23S rRNA.</text>
</comment>
<comment type="subunit">
    <text evidence="1">Part of the 50S ribosomal subunit.</text>
</comment>
<comment type="similarity">
    <text evidence="1">Belongs to the universal ribosomal protein uL15 family.</text>
</comment>
<proteinExistence type="inferred from homology"/>
<gene>
    <name evidence="1" type="primary">rplO</name>
    <name type="ordered locus">GbCGDNIH1_0573</name>
</gene>
<name>RL15_GRABC</name>
<keyword id="KW-1185">Reference proteome</keyword>
<keyword id="KW-0687">Ribonucleoprotein</keyword>
<keyword id="KW-0689">Ribosomal protein</keyword>
<keyword id="KW-0694">RNA-binding</keyword>
<keyword id="KW-0699">rRNA-binding</keyword>
<reference key="1">
    <citation type="journal article" date="2007" name="J. Bacteriol.">
        <title>Genome sequence analysis of the emerging human pathogenic acetic acid bacterium Granulibacter bethesdensis.</title>
        <authorList>
            <person name="Greenberg D.E."/>
            <person name="Porcella S.F."/>
            <person name="Zelazny A.M."/>
            <person name="Virtaneva K."/>
            <person name="Sturdevant D.E."/>
            <person name="Kupko J.J. III"/>
            <person name="Barbian K.D."/>
            <person name="Babar A."/>
            <person name="Dorward D.W."/>
            <person name="Holland S.M."/>
        </authorList>
    </citation>
    <scope>NUCLEOTIDE SEQUENCE [LARGE SCALE GENOMIC DNA]</scope>
    <source>
        <strain>ATCC BAA-1260 / CGDNIH1</strain>
    </source>
</reference>
<protein>
    <recommendedName>
        <fullName evidence="1">Large ribosomal subunit protein uL15</fullName>
    </recommendedName>
    <alternativeName>
        <fullName evidence="3">50S ribosomal protein L15</fullName>
    </alternativeName>
</protein>